<reference key="1">
    <citation type="journal article" date="2011" name="Stand. Genomic Sci.">
        <title>Complete genome sequence of the filamentous gliding predatory bacterium Herpetosiphon aurantiacus type strain (114-95(T)).</title>
        <authorList>
            <person name="Kiss H."/>
            <person name="Nett M."/>
            <person name="Domin N."/>
            <person name="Martin K."/>
            <person name="Maresca J.A."/>
            <person name="Copeland A."/>
            <person name="Lapidus A."/>
            <person name="Lucas S."/>
            <person name="Berry K.W."/>
            <person name="Glavina Del Rio T."/>
            <person name="Dalin E."/>
            <person name="Tice H."/>
            <person name="Pitluck S."/>
            <person name="Richardson P."/>
            <person name="Bruce D."/>
            <person name="Goodwin L."/>
            <person name="Han C."/>
            <person name="Detter J.C."/>
            <person name="Schmutz J."/>
            <person name="Brettin T."/>
            <person name="Land M."/>
            <person name="Hauser L."/>
            <person name="Kyrpides N.C."/>
            <person name="Ivanova N."/>
            <person name="Goeker M."/>
            <person name="Woyke T."/>
            <person name="Klenk H.P."/>
            <person name="Bryant D.A."/>
        </authorList>
    </citation>
    <scope>NUCLEOTIDE SEQUENCE [LARGE SCALE GENOMIC DNA]</scope>
    <source>
        <strain>ATCC 23779 / DSM 785 / 114-95</strain>
    </source>
</reference>
<sequence length="267" mass="28515">MFMQKFRAAATSNRSTLCIGLDPDLARLPEHLPRDAAGIVQFNQAIIEATSDLVCAYKPNMAFYEALGSAGWLALKQTIASIPSHIPVLLDAKRGDIGSTAQAYASAAFDELGVDAITLSPYMGYDSLQPFLERADKTCFILCRTSNPGGDDVQNLLLDNGEPLFLKIAELVAKRWNSNHNCGLVVGATYPAEIATIHQRYPELPLLVPGVGSQGGDIEEVLAAAGEQAIINVSRSVLYASGGSSFAEAARKVAQAFLVPKQALNHP</sequence>
<name>PYRF_HERA2</name>
<gene>
    <name evidence="1" type="primary">pyrF</name>
    <name type="ordered locus">Haur_1444</name>
</gene>
<keyword id="KW-0210">Decarboxylase</keyword>
<keyword id="KW-0456">Lyase</keyword>
<keyword id="KW-0665">Pyrimidine biosynthesis</keyword>
<dbReference type="EC" id="4.1.1.23" evidence="1"/>
<dbReference type="EMBL" id="CP000875">
    <property type="protein sequence ID" value="ABX04088.1"/>
    <property type="molecule type" value="Genomic_DNA"/>
</dbReference>
<dbReference type="SMR" id="A9B3C5"/>
<dbReference type="STRING" id="316274.Haur_1444"/>
<dbReference type="KEGG" id="hau:Haur_1444"/>
<dbReference type="eggNOG" id="COG0284">
    <property type="taxonomic scope" value="Bacteria"/>
</dbReference>
<dbReference type="HOGENOM" id="CLU_060704_1_0_0"/>
<dbReference type="InParanoid" id="A9B3C5"/>
<dbReference type="UniPathway" id="UPA00070">
    <property type="reaction ID" value="UER00120"/>
</dbReference>
<dbReference type="Proteomes" id="UP000000787">
    <property type="component" value="Chromosome"/>
</dbReference>
<dbReference type="GO" id="GO:0004590">
    <property type="term" value="F:orotidine-5'-phosphate decarboxylase activity"/>
    <property type="evidence" value="ECO:0007669"/>
    <property type="project" value="UniProtKB-UniRule"/>
</dbReference>
<dbReference type="GO" id="GO:0006207">
    <property type="term" value="P:'de novo' pyrimidine nucleobase biosynthetic process"/>
    <property type="evidence" value="ECO:0007669"/>
    <property type="project" value="InterPro"/>
</dbReference>
<dbReference type="GO" id="GO:0044205">
    <property type="term" value="P:'de novo' UMP biosynthetic process"/>
    <property type="evidence" value="ECO:0007669"/>
    <property type="project" value="UniProtKB-UniRule"/>
</dbReference>
<dbReference type="CDD" id="cd04725">
    <property type="entry name" value="OMP_decarboxylase_like"/>
    <property type="match status" value="1"/>
</dbReference>
<dbReference type="Gene3D" id="3.20.20.70">
    <property type="entry name" value="Aldolase class I"/>
    <property type="match status" value="1"/>
</dbReference>
<dbReference type="HAMAP" id="MF_01215">
    <property type="entry name" value="OMPdecase_type2"/>
    <property type="match status" value="1"/>
</dbReference>
<dbReference type="InterPro" id="IPR013785">
    <property type="entry name" value="Aldolase_TIM"/>
</dbReference>
<dbReference type="InterPro" id="IPR018089">
    <property type="entry name" value="OMPdecase_AS"/>
</dbReference>
<dbReference type="InterPro" id="IPR011995">
    <property type="entry name" value="OMPdecase_type-2"/>
</dbReference>
<dbReference type="InterPro" id="IPR001754">
    <property type="entry name" value="OMPdeCOase_dom"/>
</dbReference>
<dbReference type="InterPro" id="IPR011060">
    <property type="entry name" value="RibuloseP-bd_barrel"/>
</dbReference>
<dbReference type="NCBIfam" id="TIGR02127">
    <property type="entry name" value="pyrF_sub2"/>
    <property type="match status" value="1"/>
</dbReference>
<dbReference type="PANTHER" id="PTHR43375">
    <property type="entry name" value="OROTIDINE 5'-PHOSPHATE DECARBOXYLASE"/>
    <property type="match status" value="1"/>
</dbReference>
<dbReference type="PANTHER" id="PTHR43375:SF1">
    <property type="entry name" value="OROTIDINE 5'-PHOSPHATE DECARBOXYLASE"/>
    <property type="match status" value="1"/>
</dbReference>
<dbReference type="Pfam" id="PF00215">
    <property type="entry name" value="OMPdecase"/>
    <property type="match status" value="1"/>
</dbReference>
<dbReference type="SMART" id="SM00934">
    <property type="entry name" value="OMPdecase"/>
    <property type="match status" value="1"/>
</dbReference>
<dbReference type="SUPFAM" id="SSF51366">
    <property type="entry name" value="Ribulose-phoshate binding barrel"/>
    <property type="match status" value="1"/>
</dbReference>
<dbReference type="PROSITE" id="PS00156">
    <property type="entry name" value="OMPDECASE"/>
    <property type="match status" value="1"/>
</dbReference>
<accession>A9B3C5</accession>
<organism>
    <name type="scientific">Herpetosiphon aurantiacus (strain ATCC 23779 / DSM 785 / 114-95)</name>
    <dbReference type="NCBI Taxonomy" id="316274"/>
    <lineage>
        <taxon>Bacteria</taxon>
        <taxon>Bacillati</taxon>
        <taxon>Chloroflexota</taxon>
        <taxon>Chloroflexia</taxon>
        <taxon>Herpetosiphonales</taxon>
        <taxon>Herpetosiphonaceae</taxon>
        <taxon>Herpetosiphon</taxon>
    </lineage>
</organism>
<evidence type="ECO:0000255" key="1">
    <source>
        <dbReference type="HAMAP-Rule" id="MF_01215"/>
    </source>
</evidence>
<comment type="catalytic activity">
    <reaction evidence="1">
        <text>orotidine 5'-phosphate + H(+) = UMP + CO2</text>
        <dbReference type="Rhea" id="RHEA:11596"/>
        <dbReference type="ChEBI" id="CHEBI:15378"/>
        <dbReference type="ChEBI" id="CHEBI:16526"/>
        <dbReference type="ChEBI" id="CHEBI:57538"/>
        <dbReference type="ChEBI" id="CHEBI:57865"/>
        <dbReference type="EC" id="4.1.1.23"/>
    </reaction>
</comment>
<comment type="pathway">
    <text evidence="1">Pyrimidine metabolism; UMP biosynthesis via de novo pathway; UMP from orotate: step 2/2.</text>
</comment>
<comment type="similarity">
    <text evidence="1">Belongs to the OMP decarboxylase family. Type 2 subfamily.</text>
</comment>
<feature type="chain" id="PRO_1000164750" description="Orotidine 5'-phosphate decarboxylase">
    <location>
        <begin position="1"/>
        <end position="267"/>
    </location>
</feature>
<feature type="active site" description="Proton donor" evidence="1">
    <location>
        <position position="93"/>
    </location>
</feature>
<protein>
    <recommendedName>
        <fullName evidence="1">Orotidine 5'-phosphate decarboxylase</fullName>
        <ecNumber evidence="1">4.1.1.23</ecNumber>
    </recommendedName>
    <alternativeName>
        <fullName evidence="1">OMP decarboxylase</fullName>
        <shortName evidence="1">OMPDCase</shortName>
        <shortName evidence="1">OMPdecase</shortName>
    </alternativeName>
</protein>
<proteinExistence type="inferred from homology"/>